<evidence type="ECO:0000255" key="1">
    <source>
        <dbReference type="HAMAP-Rule" id="MF_00806"/>
    </source>
</evidence>
<organism>
    <name type="scientific">Escherichia coli (strain ATCC 8739 / DSM 1576 / NBRC 3972 / NCIMB 8545 / WDCM 00012 / Crooks)</name>
    <dbReference type="NCBI Taxonomy" id="481805"/>
    <lineage>
        <taxon>Bacteria</taxon>
        <taxon>Pseudomonadati</taxon>
        <taxon>Pseudomonadota</taxon>
        <taxon>Gammaproteobacteria</taxon>
        <taxon>Enterobacterales</taxon>
        <taxon>Enterobacteriaceae</taxon>
        <taxon>Escherichia</taxon>
    </lineage>
</organism>
<feature type="chain" id="PRO_1000083720" description="Autonomous glycyl radical cofactor">
    <location>
        <begin position="1"/>
        <end position="127"/>
    </location>
</feature>
<feature type="domain" description="Glycine radical" evidence="1">
    <location>
        <begin position="5"/>
        <end position="127"/>
    </location>
</feature>
<feature type="modified residue" description="N6-acetyllysine" evidence="1">
    <location>
        <position position="48"/>
    </location>
</feature>
<feature type="modified residue" description="N6-acetyllysine" evidence="1">
    <location>
        <position position="88"/>
    </location>
</feature>
<feature type="modified residue" description="N6-acetyllysine" evidence="1">
    <location>
        <position position="92"/>
    </location>
</feature>
<feature type="modified residue" description="Glycine radical" evidence="1">
    <location>
        <position position="102"/>
    </location>
</feature>
<comment type="function">
    <text evidence="1">Acts as a radical domain for damaged PFL and possibly other radical proteins.</text>
</comment>
<gene>
    <name evidence="1" type="primary">grcA</name>
    <name type="ordered locus">EcolC_1098</name>
</gene>
<dbReference type="EMBL" id="CP000946">
    <property type="protein sequence ID" value="ACA76765.1"/>
    <property type="molecule type" value="Genomic_DNA"/>
</dbReference>
<dbReference type="RefSeq" id="WP_000627807.1">
    <property type="nucleotide sequence ID" value="NZ_MTFT01000002.1"/>
</dbReference>
<dbReference type="SMR" id="B1IVP8"/>
<dbReference type="GeneID" id="93774507"/>
<dbReference type="KEGG" id="ecl:EcolC_1098"/>
<dbReference type="HOGENOM" id="CLU_133780_0_0_6"/>
<dbReference type="GO" id="GO:0005829">
    <property type="term" value="C:cytosol"/>
    <property type="evidence" value="ECO:0007669"/>
    <property type="project" value="TreeGrafter"/>
</dbReference>
<dbReference type="GO" id="GO:0008861">
    <property type="term" value="F:formate C-acetyltransferase activity"/>
    <property type="evidence" value="ECO:0007669"/>
    <property type="project" value="TreeGrafter"/>
</dbReference>
<dbReference type="FunFam" id="3.20.70.20:FF:000002">
    <property type="entry name" value="Autonomous glycyl radical cofactor"/>
    <property type="match status" value="1"/>
</dbReference>
<dbReference type="Gene3D" id="3.20.70.20">
    <property type="match status" value="1"/>
</dbReference>
<dbReference type="HAMAP" id="MF_00806">
    <property type="entry name" value="GrcA"/>
    <property type="match status" value="1"/>
</dbReference>
<dbReference type="InterPro" id="IPR050244">
    <property type="entry name" value="Auton_GlycylRad_Cofactor"/>
</dbReference>
<dbReference type="InterPro" id="IPR019777">
    <property type="entry name" value="Form_AcTrfase_GR_CS"/>
</dbReference>
<dbReference type="InterPro" id="IPR001150">
    <property type="entry name" value="Gly_radical"/>
</dbReference>
<dbReference type="InterPro" id="IPR011140">
    <property type="entry name" value="Glycyl_radical_cofactor_GrcA"/>
</dbReference>
<dbReference type="NCBIfam" id="TIGR04365">
    <property type="entry name" value="spare_glycyl"/>
    <property type="match status" value="1"/>
</dbReference>
<dbReference type="PANTHER" id="PTHR30191">
    <property type="entry name" value="FORMATE ACETYLTRANSFERASE"/>
    <property type="match status" value="1"/>
</dbReference>
<dbReference type="PANTHER" id="PTHR30191:SF0">
    <property type="entry name" value="FORMATE ACETYLTRANSFERASE 1"/>
    <property type="match status" value="1"/>
</dbReference>
<dbReference type="Pfam" id="PF01228">
    <property type="entry name" value="Gly_radical"/>
    <property type="match status" value="1"/>
</dbReference>
<dbReference type="PIRSF" id="PIRSF000378">
    <property type="entry name" value="Gly_radicl_yfiD"/>
    <property type="match status" value="1"/>
</dbReference>
<dbReference type="SUPFAM" id="SSF51998">
    <property type="entry name" value="PFL-like glycyl radical enzymes"/>
    <property type="match status" value="1"/>
</dbReference>
<dbReference type="PROSITE" id="PS00850">
    <property type="entry name" value="GLY_RADICAL_1"/>
    <property type="match status" value="1"/>
</dbReference>
<dbReference type="PROSITE" id="PS51149">
    <property type="entry name" value="GLY_RADICAL_2"/>
    <property type="match status" value="1"/>
</dbReference>
<sequence length="127" mass="14284">MITGIQITKAANDDLLNSFWLLDSEKGEARCIVAKAGYAEDEVVAVSKLGDIEYREVPVEVKPEVRVEGGQHLNVNVLRRETLEDAVKHPEKYPQLTIRVSGYAVRFNSLTPEQQRDVIARTFTESL</sequence>
<keyword id="KW-0007">Acetylation</keyword>
<keyword id="KW-0556">Organic radical</keyword>
<proteinExistence type="inferred from homology"/>
<protein>
    <recommendedName>
        <fullName evidence="1">Autonomous glycyl radical cofactor</fullName>
    </recommendedName>
</protein>
<accession>B1IVP8</accession>
<name>GRCA_ECOLC</name>
<reference key="1">
    <citation type="submission" date="2008-02" db="EMBL/GenBank/DDBJ databases">
        <title>Complete sequence of Escherichia coli C str. ATCC 8739.</title>
        <authorList>
            <person name="Copeland A."/>
            <person name="Lucas S."/>
            <person name="Lapidus A."/>
            <person name="Glavina del Rio T."/>
            <person name="Dalin E."/>
            <person name="Tice H."/>
            <person name="Bruce D."/>
            <person name="Goodwin L."/>
            <person name="Pitluck S."/>
            <person name="Kiss H."/>
            <person name="Brettin T."/>
            <person name="Detter J.C."/>
            <person name="Han C."/>
            <person name="Kuske C.R."/>
            <person name="Schmutz J."/>
            <person name="Larimer F."/>
            <person name="Land M."/>
            <person name="Hauser L."/>
            <person name="Kyrpides N."/>
            <person name="Mikhailova N."/>
            <person name="Ingram L."/>
            <person name="Richardson P."/>
        </authorList>
    </citation>
    <scope>NUCLEOTIDE SEQUENCE [LARGE SCALE GENOMIC DNA]</scope>
    <source>
        <strain>ATCC 8739 / DSM 1576 / NBRC 3972 / NCIMB 8545 / WDCM 00012 / Crooks</strain>
    </source>
</reference>